<proteinExistence type="evidence at protein level"/>
<name>FRDA_ECOLI</name>
<gene>
    <name type="primary">frdA</name>
    <name type="ordered locus">b4154</name>
    <name type="ordered locus">JW4115</name>
</gene>
<comment type="function">
    <text evidence="2 3 6">Two distinct, membrane-bound, FAD-containing enzymes are responsible for the catalysis of fumarate and succinate interconversion; fumarate reductase is used during anaerobic growth, and succinate dehydrogenase is used during aerobic growth. The QFR enzyme complex binds 2 quinones in or near the membrane; 1 near the [3Fe-4S] cluster (QP is proximal to the [3Fe-4S] cluster, on the cytoplasmic side of the membrane) while QD (the distal cluster) is on the other side of the membrane. It is not clear if both of the quinol-binding sites are functionally relevant (PubMed:10373108, PubMed:11850430).</text>
</comment>
<comment type="catalytic activity">
    <reaction evidence="3">
        <text>a quinone + succinate = fumarate + a quinol</text>
        <dbReference type="Rhea" id="RHEA:40523"/>
        <dbReference type="ChEBI" id="CHEBI:24646"/>
        <dbReference type="ChEBI" id="CHEBI:29806"/>
        <dbReference type="ChEBI" id="CHEBI:30031"/>
        <dbReference type="ChEBI" id="CHEBI:132124"/>
        <dbReference type="EC" id="1.3.5.1"/>
    </reaction>
</comment>
<comment type="catalytic activity">
    <reaction evidence="11">
        <text>a menaquinone + succinate = a menaquinol + fumarate</text>
        <dbReference type="Rhea" id="RHEA:27834"/>
        <dbReference type="Rhea" id="RHEA-COMP:9537"/>
        <dbReference type="Rhea" id="RHEA-COMP:9539"/>
        <dbReference type="ChEBI" id="CHEBI:16374"/>
        <dbReference type="ChEBI" id="CHEBI:18151"/>
        <dbReference type="ChEBI" id="CHEBI:29806"/>
        <dbReference type="ChEBI" id="CHEBI:30031"/>
        <dbReference type="EC" id="1.3.5.1"/>
    </reaction>
</comment>
<comment type="cofactor">
    <cofactor>
        <name>FAD</name>
        <dbReference type="ChEBI" id="CHEBI:57692"/>
    </cofactor>
    <text evidence="2 6 7">Binds 1 FAD covalently per subunit (PubMed:10373108, PubMed:24374335, PubMed:26644464). Flavinylated by SdhE, about 5% flavinylation occurs in the absence of SdhE (PubMed:24374335, PubMed:26644464).</text>
</comment>
<comment type="activity regulation">
    <text evidence="2">Inhibited by oxaloacetate, a substrate analog.</text>
</comment>
<comment type="subunit">
    <text evidence="2 3 5 7 14">Part of an enzyme complex containing four subunits: a flavoprotein (FrdA), an iron-sulfur protein (FrdB), and two hydrophobic anchor proteins (FrdC and FrdD) (PubMed:10373108, PubMed:11850430). Can be cross-linked to SdhE (PubMed:26644464). Purified from membrane fractions associated with protoporphyrinogen IX dehydrogenase (hemG) (PubMed:20484676).</text>
</comment>
<comment type="interaction">
    <interactant intactId="EBI-550480">
        <id>P00363</id>
    </interactant>
    <interactant intactId="EBI-906724">
        <id>P0AC47</id>
        <label>frdB</label>
    </interactant>
    <organismsDiffer>false</organismsDiffer>
    <experiments>4</experiments>
</comment>
<comment type="interaction">
    <interactant intactId="EBI-550480">
        <id>P00363</id>
    </interactant>
    <interactant intactId="EBI-1115706">
        <id>P0ACB4</id>
        <label>hemG</label>
    </interactant>
    <organismsDiffer>false</organismsDiffer>
    <experiments>2</experiments>
</comment>
<comment type="interaction">
    <interactant intactId="EBI-550480">
        <id>P00363</id>
    </interactant>
    <interactant intactId="EBI-550492">
        <id>P76111</id>
        <label>ydcZ</label>
    </interactant>
    <organismsDiffer>false</organismsDiffer>
    <experiments>2</experiments>
</comment>
<comment type="subcellular location">
    <subcellularLocation>
        <location evidence="11 13">Cell inner membrane</location>
        <topology evidence="11">Peripheral membrane protein</topology>
        <orientation evidence="11">Cytoplasmic side</orientation>
    </subcellularLocation>
</comment>
<comment type="disruption phenotype">
    <text evidence="6">No anaerobic growth on glycerol fumarate medium.</text>
</comment>
<comment type="similarity">
    <text evidence="10">Belongs to the FAD-dependent oxidoreductase 2 family. FRD/SDH subfamily.</text>
</comment>
<keyword id="KW-0002">3D-structure</keyword>
<keyword id="KW-0997">Cell inner membrane</keyword>
<keyword id="KW-1003">Cell membrane</keyword>
<keyword id="KW-0903">Direct protein sequencing</keyword>
<keyword id="KW-0249">Electron transport</keyword>
<keyword id="KW-0274">FAD</keyword>
<keyword id="KW-0285">Flavoprotein</keyword>
<keyword id="KW-0472">Membrane</keyword>
<keyword id="KW-0547">Nucleotide-binding</keyword>
<keyword id="KW-0560">Oxidoreductase</keyword>
<keyword id="KW-1185">Reference proteome</keyword>
<keyword id="KW-0813">Transport</keyword>
<dbReference type="EC" id="1.3.5.1" evidence="3"/>
<dbReference type="EMBL" id="J01611">
    <property type="protein sequence ID" value="AAA23437.1"/>
    <property type="molecule type" value="Genomic_DNA"/>
</dbReference>
<dbReference type="EMBL" id="U14003">
    <property type="protein sequence ID" value="AAA97053.1"/>
    <property type="molecule type" value="Genomic_DNA"/>
</dbReference>
<dbReference type="EMBL" id="U00096">
    <property type="protein sequence ID" value="AAC77114.1"/>
    <property type="molecule type" value="Genomic_DNA"/>
</dbReference>
<dbReference type="EMBL" id="AP009048">
    <property type="protein sequence ID" value="BAE78158.1"/>
    <property type="molecule type" value="Genomic_DNA"/>
</dbReference>
<dbReference type="PIR" id="A00376">
    <property type="entry name" value="RDECFF"/>
</dbReference>
<dbReference type="RefSeq" id="NP_418578.1">
    <property type="nucleotide sequence ID" value="NC_000913.3"/>
</dbReference>
<dbReference type="RefSeq" id="WP_001192973.1">
    <property type="nucleotide sequence ID" value="NZ_STEB01000014.1"/>
</dbReference>
<dbReference type="PDB" id="1KF6">
    <property type="method" value="X-ray"/>
    <property type="resolution" value="2.70 A"/>
    <property type="chains" value="A/M=1-602"/>
</dbReference>
<dbReference type="PDB" id="1KFY">
    <property type="method" value="X-ray"/>
    <property type="resolution" value="3.60 A"/>
    <property type="chains" value="A/M=1-602"/>
</dbReference>
<dbReference type="PDB" id="1L0V">
    <property type="method" value="X-ray"/>
    <property type="resolution" value="3.30 A"/>
    <property type="chains" value="A/M=1-602"/>
</dbReference>
<dbReference type="PDB" id="2B76">
    <property type="method" value="X-ray"/>
    <property type="resolution" value="3.30 A"/>
    <property type="chains" value="A/M=1-602"/>
</dbReference>
<dbReference type="PDB" id="3CIR">
    <property type="method" value="X-ray"/>
    <property type="resolution" value="3.65 A"/>
    <property type="chains" value="A/M=1-602"/>
</dbReference>
<dbReference type="PDB" id="3P4P">
    <property type="method" value="X-ray"/>
    <property type="resolution" value="2.80 A"/>
    <property type="chains" value="A/M=1-577"/>
</dbReference>
<dbReference type="PDB" id="3P4Q">
    <property type="method" value="X-ray"/>
    <property type="resolution" value="3.35 A"/>
    <property type="chains" value="A/M=1-577"/>
</dbReference>
<dbReference type="PDB" id="3P4R">
    <property type="method" value="X-ray"/>
    <property type="resolution" value="3.05 A"/>
    <property type="chains" value="A/M=1-577"/>
</dbReference>
<dbReference type="PDB" id="3P4S">
    <property type="method" value="X-ray"/>
    <property type="resolution" value="3.10 A"/>
    <property type="chains" value="A/M=1-577"/>
</dbReference>
<dbReference type="PDB" id="4KX6">
    <property type="method" value="X-ray"/>
    <property type="resolution" value="2.95 A"/>
    <property type="chains" value="A/M=1-577"/>
</dbReference>
<dbReference type="PDB" id="5VPN">
    <property type="method" value="X-ray"/>
    <property type="resolution" value="4.22 A"/>
    <property type="chains" value="A/E=1-585"/>
</dbReference>
<dbReference type="PDB" id="6AWF">
    <property type="method" value="X-ray"/>
    <property type="resolution" value="3.35 A"/>
    <property type="chains" value="A/E=1-602"/>
</dbReference>
<dbReference type="PDB" id="6B58">
    <property type="method" value="X-ray"/>
    <property type="resolution" value="2.61 A"/>
    <property type="chains" value="A/C=1-577"/>
</dbReference>
<dbReference type="PDBsum" id="1KF6"/>
<dbReference type="PDBsum" id="1KFY"/>
<dbReference type="PDBsum" id="1L0V"/>
<dbReference type="PDBsum" id="2B76"/>
<dbReference type="PDBsum" id="3CIR"/>
<dbReference type="PDBsum" id="3P4P"/>
<dbReference type="PDBsum" id="3P4Q"/>
<dbReference type="PDBsum" id="3P4R"/>
<dbReference type="PDBsum" id="3P4S"/>
<dbReference type="PDBsum" id="4KX6"/>
<dbReference type="PDBsum" id="5VPN"/>
<dbReference type="PDBsum" id="6AWF"/>
<dbReference type="PDBsum" id="6B58"/>
<dbReference type="SMR" id="P00363"/>
<dbReference type="BioGRID" id="4260883">
    <property type="interactions" value="178"/>
</dbReference>
<dbReference type="BioGRID" id="852959">
    <property type="interactions" value="1"/>
</dbReference>
<dbReference type="ComplexPortal" id="CPX-1967">
    <property type="entry name" value="Plasma membrane fumarate reductase complex"/>
</dbReference>
<dbReference type="DIP" id="DIP-9681N"/>
<dbReference type="FunCoup" id="P00363">
    <property type="interactions" value="403"/>
</dbReference>
<dbReference type="IntAct" id="P00363">
    <property type="interactions" value="15"/>
</dbReference>
<dbReference type="STRING" id="511145.b4154"/>
<dbReference type="DrugBank" id="DB07490">
    <property type="generic name" value="2-[1-(4-CHLORO-PHENYL)-ETHYL]-4,6-DINITRO-PHENOL"/>
</dbReference>
<dbReference type="DrugBank" id="DB07918">
    <property type="generic name" value="2-heptyl-4-hydroxyquinoline N-oxide"/>
</dbReference>
<dbReference type="DrugBank" id="DB00730">
    <property type="generic name" value="Thiabendazole"/>
</dbReference>
<dbReference type="jPOST" id="P00363"/>
<dbReference type="PaxDb" id="511145-b4154"/>
<dbReference type="EnsemblBacteria" id="AAC77114">
    <property type="protein sequence ID" value="AAC77114"/>
    <property type="gene ID" value="b4154"/>
</dbReference>
<dbReference type="GeneID" id="93777668"/>
<dbReference type="GeneID" id="948667"/>
<dbReference type="KEGG" id="ecj:JW4115"/>
<dbReference type="KEGG" id="eco:b4154"/>
<dbReference type="KEGG" id="ecoc:C3026_22455"/>
<dbReference type="PATRIC" id="fig|1411691.4.peg.2544"/>
<dbReference type="EchoBASE" id="EB0326"/>
<dbReference type="eggNOG" id="COG1053">
    <property type="taxonomic scope" value="Bacteria"/>
</dbReference>
<dbReference type="HOGENOM" id="CLU_014312_6_2_6"/>
<dbReference type="InParanoid" id="P00363"/>
<dbReference type="OMA" id="PTAHHFM"/>
<dbReference type="OrthoDB" id="9806724at2"/>
<dbReference type="PhylomeDB" id="P00363"/>
<dbReference type="BioCyc" id="EcoCyc:FUM-FLAVO"/>
<dbReference type="BioCyc" id="MetaCyc:FUM-FLAVO"/>
<dbReference type="BRENDA" id="1.3.5.4">
    <property type="organism ID" value="2026"/>
</dbReference>
<dbReference type="SABIO-RK" id="P00363"/>
<dbReference type="EvolutionaryTrace" id="P00363"/>
<dbReference type="PRO" id="PR:P00363"/>
<dbReference type="Proteomes" id="UP000000625">
    <property type="component" value="Chromosome"/>
</dbReference>
<dbReference type="GO" id="GO:0005829">
    <property type="term" value="C:cytosol"/>
    <property type="evidence" value="ECO:0000314"/>
    <property type="project" value="EcoCyc"/>
</dbReference>
<dbReference type="GO" id="GO:0045283">
    <property type="term" value="C:fumarate reductase complex"/>
    <property type="evidence" value="ECO:0000314"/>
    <property type="project" value="EcoCyc"/>
</dbReference>
<dbReference type="GO" id="GO:0016020">
    <property type="term" value="C:membrane"/>
    <property type="evidence" value="ECO:0000314"/>
    <property type="project" value="ComplexPortal"/>
</dbReference>
<dbReference type="GO" id="GO:0005886">
    <property type="term" value="C:plasma membrane"/>
    <property type="evidence" value="ECO:0000318"/>
    <property type="project" value="GO_Central"/>
</dbReference>
<dbReference type="GO" id="GO:0009055">
    <property type="term" value="F:electron transfer activity"/>
    <property type="evidence" value="ECO:0000314"/>
    <property type="project" value="EcoCyc"/>
</dbReference>
<dbReference type="GO" id="GO:0071949">
    <property type="term" value="F:FAD binding"/>
    <property type="evidence" value="ECO:0000314"/>
    <property type="project" value="EcoCyc"/>
</dbReference>
<dbReference type="GO" id="GO:0050660">
    <property type="term" value="F:flavin adenine dinucleotide binding"/>
    <property type="evidence" value="ECO:0000318"/>
    <property type="project" value="GO_Central"/>
</dbReference>
<dbReference type="GO" id="GO:0008177">
    <property type="term" value="F:succinate dehydrogenase (quinone) activity"/>
    <property type="evidence" value="ECO:0007669"/>
    <property type="project" value="RHEA"/>
</dbReference>
<dbReference type="GO" id="GO:0000104">
    <property type="term" value="F:succinate dehydrogenase activity"/>
    <property type="evidence" value="ECO:0000318"/>
    <property type="project" value="GO_Central"/>
</dbReference>
<dbReference type="GO" id="GO:0019645">
    <property type="term" value="P:anaerobic electron transport chain"/>
    <property type="evidence" value="ECO:0000303"/>
    <property type="project" value="ComplexPortal"/>
</dbReference>
<dbReference type="GO" id="GO:0009061">
    <property type="term" value="P:anaerobic respiration"/>
    <property type="evidence" value="ECO:0000315"/>
    <property type="project" value="EcoCyc"/>
</dbReference>
<dbReference type="GO" id="GO:0044780">
    <property type="term" value="P:bacterial-type flagellum assembly"/>
    <property type="evidence" value="ECO:0000315"/>
    <property type="project" value="EcoCyc"/>
</dbReference>
<dbReference type="GO" id="GO:0006974">
    <property type="term" value="P:DNA damage response"/>
    <property type="evidence" value="ECO:0000270"/>
    <property type="project" value="EcoliWiki"/>
</dbReference>
<dbReference type="GO" id="GO:0006113">
    <property type="term" value="P:fermentation"/>
    <property type="evidence" value="ECO:0000315"/>
    <property type="project" value="EcoCyc"/>
</dbReference>
<dbReference type="FunFam" id="3.50.50.60:FF:000017">
    <property type="entry name" value="Fumarate reductase flavoprotein subunit"/>
    <property type="match status" value="1"/>
</dbReference>
<dbReference type="FunFam" id="3.90.700.10:FF:000003">
    <property type="entry name" value="Fumarate reductase flavoprotein subunit"/>
    <property type="match status" value="1"/>
</dbReference>
<dbReference type="FunFam" id="4.10.80.40:FF:000003">
    <property type="entry name" value="Fumarate reductase flavoprotein subunit"/>
    <property type="match status" value="1"/>
</dbReference>
<dbReference type="FunFam" id="1.20.58.100:FF:000001">
    <property type="entry name" value="Succinate dehydrogenase flavoprotein subunit (SdhA)"/>
    <property type="match status" value="1"/>
</dbReference>
<dbReference type="Gene3D" id="3.50.50.60">
    <property type="entry name" value="FAD/NAD(P)-binding domain"/>
    <property type="match status" value="1"/>
</dbReference>
<dbReference type="Gene3D" id="1.20.58.100">
    <property type="entry name" value="Fumarate reductase/succinate dehydrogenase flavoprotein-like, C-terminal domain"/>
    <property type="match status" value="1"/>
</dbReference>
<dbReference type="Gene3D" id="4.10.80.40">
    <property type="entry name" value="succinate dehydrogenase protein domain"/>
    <property type="match status" value="1"/>
</dbReference>
<dbReference type="Gene3D" id="3.90.700.10">
    <property type="entry name" value="Succinate dehydrogenase/fumarate reductase flavoprotein, catalytic domain"/>
    <property type="match status" value="1"/>
</dbReference>
<dbReference type="InterPro" id="IPR003953">
    <property type="entry name" value="FAD-dep_OxRdtase_2_FAD-bd"/>
</dbReference>
<dbReference type="InterPro" id="IPR036188">
    <property type="entry name" value="FAD/NAD-bd_sf"/>
</dbReference>
<dbReference type="InterPro" id="IPR003952">
    <property type="entry name" value="FRD_SDH_FAD_BS"/>
</dbReference>
<dbReference type="InterPro" id="IPR037099">
    <property type="entry name" value="Fum_R/Succ_DH_flav-like_C_sf"/>
</dbReference>
<dbReference type="InterPro" id="IPR015939">
    <property type="entry name" value="Fum_Rdtase/Succ_DH_flav-like_C"/>
</dbReference>
<dbReference type="InterPro" id="IPR005884">
    <property type="entry name" value="Fum_red_fp"/>
</dbReference>
<dbReference type="InterPro" id="IPR030664">
    <property type="entry name" value="SdhA/FrdA/AprA"/>
</dbReference>
<dbReference type="InterPro" id="IPR027477">
    <property type="entry name" value="Succ_DH/fumarate_Rdtase_cat_sf"/>
</dbReference>
<dbReference type="InterPro" id="IPR014006">
    <property type="entry name" value="Succ_Dhase_FrdA_Gneg"/>
</dbReference>
<dbReference type="NCBIfam" id="TIGR01176">
    <property type="entry name" value="fum_red_Fp"/>
    <property type="match status" value="1"/>
</dbReference>
<dbReference type="NCBIfam" id="NF006686">
    <property type="entry name" value="PRK09231.1"/>
    <property type="match status" value="1"/>
</dbReference>
<dbReference type="NCBIfam" id="TIGR01812">
    <property type="entry name" value="sdhA_frdA_Gneg"/>
    <property type="match status" value="1"/>
</dbReference>
<dbReference type="PANTHER" id="PTHR11632:SF82">
    <property type="entry name" value="FUMARATE REDUCTASE FLAVOPROTEIN SUBUNIT"/>
    <property type="match status" value="1"/>
</dbReference>
<dbReference type="PANTHER" id="PTHR11632">
    <property type="entry name" value="SUCCINATE DEHYDROGENASE 2 FLAVOPROTEIN SUBUNIT"/>
    <property type="match status" value="1"/>
</dbReference>
<dbReference type="Pfam" id="PF00890">
    <property type="entry name" value="FAD_binding_2"/>
    <property type="match status" value="1"/>
</dbReference>
<dbReference type="Pfam" id="PF02910">
    <property type="entry name" value="Succ_DH_flav_C"/>
    <property type="match status" value="1"/>
</dbReference>
<dbReference type="PIRSF" id="PIRSF000171">
    <property type="entry name" value="SDHA_APRA_LASPO"/>
    <property type="match status" value="1"/>
</dbReference>
<dbReference type="PRINTS" id="PR00368">
    <property type="entry name" value="FADPNR"/>
</dbReference>
<dbReference type="PRINTS" id="PR00411">
    <property type="entry name" value="PNDRDTASEI"/>
</dbReference>
<dbReference type="SUPFAM" id="SSF51905">
    <property type="entry name" value="FAD/NAD(P)-binding domain"/>
    <property type="match status" value="1"/>
</dbReference>
<dbReference type="SUPFAM" id="SSF46977">
    <property type="entry name" value="Succinate dehydrogenase/fumarate reductase flavoprotein C-terminal domain"/>
    <property type="match status" value="1"/>
</dbReference>
<dbReference type="SUPFAM" id="SSF56425">
    <property type="entry name" value="Succinate dehydrogenase/fumarate reductase flavoprotein, catalytic domain"/>
    <property type="match status" value="1"/>
</dbReference>
<dbReference type="PROSITE" id="PS00504">
    <property type="entry name" value="FRD_SDH_FAD_BINDING"/>
    <property type="match status" value="1"/>
</dbReference>
<reference key="1">
    <citation type="journal article" date="1982" name="Eur. J. Biochem.">
        <title>Nucleotide sequence coding for the flavoprotein subunit of the fumarate reductase of Escherichia coli.</title>
        <authorList>
            <person name="Cole S.T."/>
        </authorList>
    </citation>
    <scope>NUCLEOTIDE SEQUENCE [GENOMIC DNA]</scope>
    <source>
        <strain>K12</strain>
    </source>
</reference>
<reference key="2">
    <citation type="journal article" date="1995" name="Nucleic Acids Res.">
        <title>Analysis of the Escherichia coli genome VI: DNA sequence of the region from 92.8 through 100 minutes.</title>
        <authorList>
            <person name="Burland V.D."/>
            <person name="Plunkett G. III"/>
            <person name="Sofia H.J."/>
            <person name="Daniels D.L."/>
            <person name="Blattner F.R."/>
        </authorList>
    </citation>
    <scope>NUCLEOTIDE SEQUENCE [LARGE SCALE GENOMIC DNA]</scope>
    <source>
        <strain>K12 / MG1655 / ATCC 47076</strain>
    </source>
</reference>
<reference key="3">
    <citation type="journal article" date="1997" name="Science">
        <title>The complete genome sequence of Escherichia coli K-12.</title>
        <authorList>
            <person name="Blattner F.R."/>
            <person name="Plunkett G. III"/>
            <person name="Bloch C.A."/>
            <person name="Perna N.T."/>
            <person name="Burland V."/>
            <person name="Riley M."/>
            <person name="Collado-Vides J."/>
            <person name="Glasner J.D."/>
            <person name="Rode C.K."/>
            <person name="Mayhew G.F."/>
            <person name="Gregor J."/>
            <person name="Davis N.W."/>
            <person name="Kirkpatrick H.A."/>
            <person name="Goeden M.A."/>
            <person name="Rose D.J."/>
            <person name="Mau B."/>
            <person name="Shao Y."/>
        </authorList>
    </citation>
    <scope>NUCLEOTIDE SEQUENCE [LARGE SCALE GENOMIC DNA]</scope>
    <source>
        <strain>K12 / MG1655 / ATCC 47076</strain>
    </source>
</reference>
<reference key="4">
    <citation type="journal article" date="2006" name="Mol. Syst. Biol.">
        <title>Highly accurate genome sequences of Escherichia coli K-12 strains MG1655 and W3110.</title>
        <authorList>
            <person name="Hayashi K."/>
            <person name="Morooka N."/>
            <person name="Yamamoto Y."/>
            <person name="Fujita K."/>
            <person name="Isono K."/>
            <person name="Choi S."/>
            <person name="Ohtsubo E."/>
            <person name="Baba T."/>
            <person name="Wanner B.L."/>
            <person name="Mori H."/>
            <person name="Horiuchi T."/>
        </authorList>
    </citation>
    <scope>NUCLEOTIDE SEQUENCE [LARGE SCALE GENOMIC DNA]</scope>
    <source>
        <strain>K12 / W3110 / ATCC 27325 / DSM 5911</strain>
    </source>
</reference>
<reference key="5">
    <citation type="journal article" date="2016" name="J. Biol. Chem.">
        <title>Binding of the covalent flavin assembly factor to the flavoprotein subunit of complex II.</title>
        <authorList>
            <person name="Maklashina E."/>
            <person name="Rajagukguk S."/>
            <person name="Starbird C.A."/>
            <person name="McDonald W.H."/>
            <person name="Koganitsky A."/>
            <person name="Eisenbach M."/>
            <person name="Iverson T.M."/>
            <person name="Cecchini G."/>
        </authorList>
    </citation>
    <scope>PROTEIN SEQUENCE OF 170-185</scope>
    <scope>COFACTOR</scope>
    <scope>SUBUNIT</scope>
    <scope>MUTAGENESIS OF LYS-131; MET-177; GLU-178; GLY-207 AND SER-240</scope>
    <source>
        <strain>K12 / RP437</strain>
    </source>
</reference>
<reference key="6">
    <citation type="journal article" date="1989" name="J. Biol. Chem.">
        <title>Fumarate reductase mutants of Escherichia coli that lack covalently bound flavin.</title>
        <authorList>
            <person name="Blaut M."/>
            <person name="Whittaker K."/>
            <person name="Valdovinos A."/>
            <person name="Ackrell B.A."/>
            <person name="Gunsalus R.P."/>
            <person name="Cecchini G."/>
        </authorList>
    </citation>
    <scope>COFACTOR</scope>
    <scope>MUTAGENESIS OF HIS-45; LYS-131; MET-177; GLU-178; GLY-207; HIS-233; SER-240; CYS-248 AND ARG-249</scope>
</reference>
<reference key="7">
    <citation type="journal article" date="1991" name="J. Biol. Chem.">
        <title>Identification of active site residues of Escherichia coli fumarate reductase by site-directed mutagenesis.</title>
        <authorList>
            <person name="Schroeder I."/>
            <person name="Gunsalus R.P."/>
            <person name="Ackrell B.A.C."/>
            <person name="Cochran B."/>
            <person name="Cecchini G."/>
        </authorList>
    </citation>
    <scope>ACTIVE SITE</scope>
    <scope>MUTAGENESIS OF HIS-233; CYS-248 AND ARG-249</scope>
</reference>
<reference key="8">
    <citation type="journal article" date="1997" name="Electrophoresis">
        <title>Escherichia coli proteome analysis using the gene-protein database.</title>
        <authorList>
            <person name="VanBogelen R.A."/>
            <person name="Abshire K.Z."/>
            <person name="Moldover B."/>
            <person name="Olson E.R."/>
            <person name="Neidhardt F.C."/>
        </authorList>
    </citation>
    <scope>IDENTIFICATION BY 2D-GEL</scope>
</reference>
<reference key="9">
    <citation type="journal article" date="2010" name="Proc. Natl. Acad. Sci. U.S.A.">
        <title>Heme biosynthesis is coupled to electron transport chains for energy generation.</title>
        <authorList>
            <person name="Moebius K."/>
            <person name="Arias-Cartin R."/>
            <person name="Breckau D."/>
            <person name="Haennig A.L."/>
            <person name="Riedmann K."/>
            <person name="Biedendieck R."/>
            <person name="Schroeder S."/>
            <person name="Becher D."/>
            <person name="Magalon A."/>
            <person name="Moser J."/>
            <person name="Jahn M."/>
            <person name="Jahn D."/>
        </authorList>
    </citation>
    <scope>SUBUNIT</scope>
    <scope>SUBCELLULAR LOCATION</scope>
</reference>
<reference key="10">
    <citation type="journal article" date="2014" name="FEBS Lett.">
        <title>The succinate dehydrogenase assembly factor, SdhE, is required for the flavinylation and activation of fumarate reductase in bacteria.</title>
        <authorList>
            <person name="McNeil M.B."/>
            <person name="Hampton H.G."/>
            <person name="Hards K.J."/>
            <person name="Watson B.N."/>
            <person name="Cook G.M."/>
            <person name="Fineran P.C."/>
        </authorList>
    </citation>
    <scope>FUNCTION</scope>
    <scope>DISRUPTION PHENOTYPE</scope>
    <source>
        <strain>K12 / BW25113</strain>
    </source>
</reference>
<reference key="11">
    <citation type="journal article" date="1999" name="Science">
        <title>Structure of the Escherichia coli fumarate reductase respiratory complex.</title>
        <authorList>
            <person name="Iverson T.M."/>
            <person name="Luna-Chavez C."/>
            <person name="Cecchini G."/>
            <person name="Rees D.C."/>
        </authorList>
    </citation>
    <scope>X-RAY CRYSTALLOGRAPHY (3.3 ANGSTROMS) IN COMPLEX WITH FAD AND SUBSTRATE ANALOG</scope>
    <scope>COFACTOR</scope>
    <scope>ACTIVITY REGULATION</scope>
    <scope>SUBUNIT</scope>
    <scope>SUBCELLULAR LOCATION</scope>
</reference>
<reference evidence="15 16 17" key="12">
    <citation type="journal article" date="2002" name="J. Biol. Chem.">
        <title>Crystallographic studies of the Escherichia coli quinol-fumarate reductase with inhibitors bound to the quinol-binding site.</title>
        <authorList>
            <person name="Iverson T.M."/>
            <person name="Luna-Chavez C."/>
            <person name="Croal L.R."/>
            <person name="Cecchini G."/>
            <person name="Rees D.C."/>
        </authorList>
    </citation>
    <scope>X-RAY CRYSTALLOGRAPHY (2.7 ANGSTROMS) IN COMPLEX WITH FAD; SUBSTRATE ANALOGS AND INHIBITORS</scope>
    <scope>CATALYTIC ACTIVITY</scope>
    <scope>SUBUNIT</scope>
</reference>
<accession>P00363</accession>
<accession>Q2M6E8</accession>
<protein>
    <recommendedName>
        <fullName>Fumarate reductase flavoprotein subunit</fullName>
        <ecNumber evidence="3">1.3.5.1</ecNumber>
    </recommendedName>
    <alternativeName>
        <fullName evidence="9">Quinol-fumarate reductase flavoprotein subunit</fullName>
        <shortName evidence="9">QFR flavoprotein subunit</shortName>
    </alternativeName>
</protein>
<sequence>MQTFQADLAIVGAGGAGLRAAIAAAQANPNAKIALISKVYPMRSHTVAAEGGSAAVAQDHDSFEYHFHDTVAGGDWLCEQDVVDYFVHHCPTEMTQLELWGCPWSRRPDGSVNVRRFGGMKIERTWFAADKTGFHMLHTLFQTSLQFPQIQRFDEHFVLDILVDDGHVRGLVAMNMMEGTLVQIRANAVVMATGGAGRVYRYNTNGGIVTGDGMGMALSHGVPLRDMEFVQYHPTGLPGSGILMTEGCRGEGGILVNKNGYRYLQDYGMGPETPLGEPKNKYMELGPRDKVSQAFWHEWRKGNTISTPRGDVVYLDLRHLGEKKLHERLPFICELAKAYVGVDPVKEPIPVRPTAHYTMGGIETDQNCETRIKGLFAVGECSSVGLHGANRLGSNSLAELVVFGRLAGEQATERAATAGNGNEAAIEAQAAGVEQRLKDLVNQDGGENWAKIRDEMGLAMEEGCGIYRTPELMQKTIDKLAELQERFKRVRITDTSSVFNTDLLYTIELGHGLNVAECMAHSAMARKESRGAHQRLDEGCTERDDVNFLKHTLAFRDADGTTRLEYSDVKITTLPPAKRVYGGEADAADKAEAANKKEKANG</sequence>
<organism>
    <name type="scientific">Escherichia coli (strain K12)</name>
    <dbReference type="NCBI Taxonomy" id="83333"/>
    <lineage>
        <taxon>Bacteria</taxon>
        <taxon>Pseudomonadati</taxon>
        <taxon>Pseudomonadota</taxon>
        <taxon>Gammaproteobacteria</taxon>
        <taxon>Enterobacterales</taxon>
        <taxon>Enterobacteriaceae</taxon>
        <taxon>Escherichia</taxon>
    </lineage>
</organism>
<feature type="initiator methionine" description="Removed">
    <location>
        <position position="1"/>
    </location>
</feature>
<feature type="chain" id="PRO_0000158660" description="Fumarate reductase flavoprotein subunit">
    <location>
        <begin position="2"/>
        <end position="602"/>
    </location>
</feature>
<feature type="region of interest" description="Disordered" evidence="1">
    <location>
        <begin position="581"/>
        <end position="602"/>
    </location>
</feature>
<feature type="compositionally biased region" description="Basic and acidic residues" evidence="1">
    <location>
        <begin position="587"/>
        <end position="602"/>
    </location>
</feature>
<feature type="active site" evidence="12">
    <location>
        <position position="233"/>
    </location>
</feature>
<feature type="active site" evidence="12">
    <location>
        <position position="249"/>
    </location>
</feature>
<feature type="binding site" evidence="15 16 17">
    <location>
        <begin position="12"/>
        <end position="16"/>
    </location>
    <ligand>
        <name>FAD</name>
        <dbReference type="ChEBI" id="CHEBI:57692"/>
    </ligand>
</feature>
<feature type="binding site" evidence="15 16 17">
    <location>
        <begin position="36"/>
        <end position="38"/>
    </location>
    <ligand>
        <name>FAD</name>
        <dbReference type="ChEBI" id="CHEBI:57692"/>
    </ligand>
</feature>
<feature type="binding site" evidence="15 16 17">
    <location>
        <begin position="44"/>
        <end position="52"/>
    </location>
    <ligand>
        <name>FAD</name>
        <dbReference type="ChEBI" id="CHEBI:57692"/>
    </ligand>
</feature>
<feature type="binding site" evidence="15 16 17">
    <location>
        <begin position="156"/>
        <end position="158"/>
    </location>
    <ligand>
        <name>FAD</name>
        <dbReference type="ChEBI" id="CHEBI:57692"/>
    </ligand>
</feature>
<feature type="binding site" evidence="15">
    <location>
        <begin position="192"/>
        <end position="193"/>
    </location>
    <ligand>
        <name>FAD</name>
        <dbReference type="ChEBI" id="CHEBI:57692"/>
    </ligand>
</feature>
<feature type="binding site" evidence="15 16 17">
    <location>
        <position position="212"/>
    </location>
    <ligand>
        <name>FAD</name>
        <dbReference type="ChEBI" id="CHEBI:57692"/>
    </ligand>
</feature>
<feature type="binding site" evidence="18 19">
    <location>
        <begin position="356"/>
        <end position="357"/>
    </location>
    <ligand>
        <name>FAD</name>
        <dbReference type="ChEBI" id="CHEBI:57692"/>
    </ligand>
</feature>
<feature type="binding site" evidence="15 16 17">
    <location>
        <position position="380"/>
    </location>
    <ligand>
        <name>FAD</name>
        <dbReference type="ChEBI" id="CHEBI:57692"/>
    </ligand>
</feature>
<feature type="binding site" evidence="15 16 17">
    <location>
        <begin position="391"/>
        <end position="397"/>
    </location>
    <ligand>
        <name>FAD</name>
        <dbReference type="ChEBI" id="CHEBI:57692"/>
    </ligand>
</feature>
<feature type="modified residue" description="Tele-8alpha-FAD histidine" evidence="2 17">
    <location>
        <position position="45"/>
    </location>
</feature>
<feature type="mutagenesis site" description="Inactivates enzyme." evidence="8">
    <original>H</original>
    <variation>R</variation>
    <location>
        <position position="45"/>
    </location>
</feature>
<feature type="mutagenesis site" description="Decreased ability (greater than 70%) to reduce fumarate." evidence="8">
    <original>H</original>
    <variation>S</variation>
    <variation>C</variation>
    <variation>Y</variation>
    <location>
        <position position="45"/>
    </location>
</feature>
<feature type="mutagenesis site" description="Increased cross-linking to SdhE, FrdA is slightly less flavinylated." evidence="7">
    <original>K</original>
    <variation>M</variation>
    <location>
        <position position="131"/>
    </location>
</feature>
<feature type="mutagenesis site" description="No longer forms cross-link to SdhE, FrdA is still flavinylated." evidence="7">
    <original>M</original>
    <variation>A</variation>
    <location>
        <position position="177"/>
    </location>
</feature>
<feature type="mutagenesis site" description="Decreased cross-linking to SdhE, FrdA is still flavinylated." evidence="7">
    <original>E</original>
    <variation>A</variation>
    <location>
        <position position="178"/>
    </location>
</feature>
<feature type="mutagenesis site" description="Increased cross-linking to SdhE, FrdA is flavinylated." evidence="7">
    <original>G</original>
    <variation>M</variation>
    <location>
        <position position="207"/>
    </location>
</feature>
<feature type="mutagenesis site" description="Severely affects succinate oxidation, decreases fumarate oxidation by 75%." evidence="4">
    <original>H</original>
    <variation>S</variation>
    <location>
        <position position="233"/>
    </location>
</feature>
<feature type="mutagenesis site" description="Increased cross-linking to SdhE, FrdA is flavinylated." evidence="7">
    <original>S</original>
    <variation>M</variation>
    <location>
        <position position="240"/>
    </location>
</feature>
<feature type="mutagenesis site" description="Does not inactivate enzyme." evidence="4">
    <original>C</original>
    <variation>S</variation>
    <variation>A</variation>
    <location>
        <position position="248"/>
    </location>
</feature>
<feature type="mutagenesis site" description="Inactivates enzyme." evidence="4">
    <original>R</original>
    <variation>H</variation>
    <variation>L</variation>
    <location>
        <position position="249"/>
    </location>
</feature>
<feature type="sequence conflict" description="In Ref. 1; AAA23437." evidence="10" ref="1">
    <original>L</original>
    <variation>P</variation>
    <location>
        <position position="386"/>
    </location>
</feature>
<feature type="strand" evidence="23">
    <location>
        <begin position="2"/>
        <end position="5"/>
    </location>
</feature>
<feature type="strand" evidence="23">
    <location>
        <begin position="7"/>
        <end position="11"/>
    </location>
</feature>
<feature type="helix" evidence="23">
    <location>
        <begin position="15"/>
        <end position="27"/>
    </location>
</feature>
<feature type="strand" evidence="23">
    <location>
        <begin position="33"/>
        <end position="39"/>
    </location>
</feature>
<feature type="helix" evidence="23">
    <location>
        <begin position="41"/>
        <end position="43"/>
    </location>
</feature>
<feature type="helix" evidence="23">
    <location>
        <begin position="45"/>
        <end position="48"/>
    </location>
</feature>
<feature type="strand" evidence="22">
    <location>
        <begin position="58"/>
        <end position="60"/>
    </location>
</feature>
<feature type="helix" evidence="23">
    <location>
        <begin position="63"/>
        <end position="73"/>
    </location>
</feature>
<feature type="turn" evidence="23">
    <location>
        <begin position="74"/>
        <end position="76"/>
    </location>
</feature>
<feature type="helix" evidence="23">
    <location>
        <begin position="80"/>
        <end position="99"/>
    </location>
</feature>
<feature type="strand" evidence="20">
    <location>
        <begin position="110"/>
        <end position="112"/>
    </location>
</feature>
<feature type="strand" evidence="21">
    <location>
        <begin position="128"/>
        <end position="130"/>
    </location>
</feature>
<feature type="helix" evidence="23">
    <location>
        <begin position="132"/>
        <end position="145"/>
    </location>
</feature>
<feature type="strand" evidence="23">
    <location>
        <begin position="150"/>
        <end position="154"/>
    </location>
</feature>
<feature type="strand" evidence="23">
    <location>
        <begin position="156"/>
        <end position="175"/>
    </location>
</feature>
<feature type="turn" evidence="23">
    <location>
        <begin position="176"/>
        <end position="178"/>
    </location>
</feature>
<feature type="strand" evidence="23">
    <location>
        <begin position="181"/>
        <end position="185"/>
    </location>
</feature>
<feature type="strand" evidence="23">
    <location>
        <begin position="187"/>
        <end position="191"/>
    </location>
</feature>
<feature type="helix" evidence="23">
    <location>
        <begin position="197"/>
        <end position="199"/>
    </location>
</feature>
<feature type="strand" evidence="23">
    <location>
        <begin position="200"/>
        <end position="205"/>
    </location>
</feature>
<feature type="helix" evidence="23">
    <location>
        <begin position="212"/>
        <end position="219"/>
    </location>
</feature>
<feature type="strand" evidence="23">
    <location>
        <begin position="224"/>
        <end position="226"/>
    </location>
</feature>
<feature type="strand" evidence="23">
    <location>
        <begin position="230"/>
        <end position="236"/>
    </location>
</feature>
<feature type="turn" evidence="23">
    <location>
        <begin position="238"/>
        <end position="240"/>
    </location>
</feature>
<feature type="helix" evidence="23">
    <location>
        <begin position="247"/>
        <end position="250"/>
    </location>
</feature>
<feature type="strand" evidence="23">
    <location>
        <begin position="254"/>
        <end position="256"/>
    </location>
</feature>
<feature type="helix" evidence="23">
    <location>
        <begin position="263"/>
        <end position="266"/>
    </location>
</feature>
<feature type="turn" evidence="20">
    <location>
        <begin position="267"/>
        <end position="269"/>
    </location>
</feature>
<feature type="helix" evidence="23">
    <location>
        <begin position="283"/>
        <end position="285"/>
    </location>
</feature>
<feature type="helix" evidence="23">
    <location>
        <begin position="288"/>
        <end position="300"/>
    </location>
</feature>
<feature type="strand" evidence="23">
    <location>
        <begin position="304"/>
        <end position="307"/>
    </location>
</feature>
<feature type="strand" evidence="23">
    <location>
        <begin position="310"/>
        <end position="316"/>
    </location>
</feature>
<feature type="turn" evidence="23">
    <location>
        <begin position="318"/>
        <end position="320"/>
    </location>
</feature>
<feature type="helix" evidence="23">
    <location>
        <begin position="322"/>
        <end position="327"/>
    </location>
</feature>
<feature type="helix" evidence="23">
    <location>
        <begin position="332"/>
        <end position="339"/>
    </location>
</feature>
<feature type="turn" evidence="23">
    <location>
        <begin position="344"/>
        <end position="346"/>
    </location>
</feature>
<feature type="strand" evidence="23">
    <location>
        <begin position="349"/>
        <end position="358"/>
    </location>
</feature>
<feature type="strand" evidence="23">
    <location>
        <begin position="361"/>
        <end position="363"/>
    </location>
</feature>
<feature type="strand" evidence="23">
    <location>
        <begin position="371"/>
        <end position="373"/>
    </location>
</feature>
<feature type="strand" evidence="23">
    <location>
        <begin position="375"/>
        <end position="377"/>
    </location>
</feature>
<feature type="helix" evidence="23">
    <location>
        <begin position="379"/>
        <end position="381"/>
    </location>
</feature>
<feature type="strand" evidence="23">
    <location>
        <begin position="385"/>
        <end position="387"/>
    </location>
</feature>
<feature type="helix" evidence="23">
    <location>
        <begin position="395"/>
        <end position="415"/>
    </location>
</feature>
<feature type="helix" evidence="23">
    <location>
        <begin position="423"/>
        <end position="440"/>
    </location>
</feature>
<feature type="helix" evidence="23">
    <location>
        <begin position="449"/>
        <end position="463"/>
    </location>
</feature>
<feature type="strand" evidence="23">
    <location>
        <begin position="464"/>
        <end position="468"/>
    </location>
</feature>
<feature type="helix" evidence="23">
    <location>
        <begin position="470"/>
        <end position="487"/>
    </location>
</feature>
<feature type="strand" evidence="22">
    <location>
        <begin position="497"/>
        <end position="499"/>
    </location>
</feature>
<feature type="helix" evidence="23">
    <location>
        <begin position="501"/>
        <end position="525"/>
    </location>
</feature>
<feature type="strand" evidence="23">
    <location>
        <begin position="533"/>
        <end position="535"/>
    </location>
</feature>
<feature type="strand" evidence="23">
    <location>
        <begin position="540"/>
        <end position="542"/>
    </location>
</feature>
<feature type="turn" evidence="23">
    <location>
        <begin position="545"/>
        <end position="547"/>
    </location>
</feature>
<feature type="strand" evidence="23">
    <location>
        <begin position="550"/>
        <end position="556"/>
    </location>
</feature>
<feature type="strand" evidence="23">
    <location>
        <begin position="562"/>
        <end position="567"/>
    </location>
</feature>
<evidence type="ECO:0000256" key="1">
    <source>
        <dbReference type="SAM" id="MobiDB-lite"/>
    </source>
</evidence>
<evidence type="ECO:0000269" key="2">
    <source>
    </source>
</evidence>
<evidence type="ECO:0000269" key="3">
    <source>
    </source>
</evidence>
<evidence type="ECO:0000269" key="4">
    <source>
    </source>
</evidence>
<evidence type="ECO:0000269" key="5">
    <source>
    </source>
</evidence>
<evidence type="ECO:0000269" key="6">
    <source>
    </source>
</evidence>
<evidence type="ECO:0000269" key="7">
    <source>
    </source>
</evidence>
<evidence type="ECO:0000269" key="8">
    <source>
    </source>
</evidence>
<evidence type="ECO:0000303" key="9">
    <source>
    </source>
</evidence>
<evidence type="ECO:0000305" key="10"/>
<evidence type="ECO:0000305" key="11">
    <source>
    </source>
</evidence>
<evidence type="ECO:0000305" key="12">
    <source>
    </source>
</evidence>
<evidence type="ECO:0000305" key="13">
    <source>
    </source>
</evidence>
<evidence type="ECO:0000305" key="14">
    <source>
    </source>
</evidence>
<evidence type="ECO:0007744" key="15">
    <source>
        <dbReference type="PDB" id="1KF6"/>
    </source>
</evidence>
<evidence type="ECO:0007744" key="16">
    <source>
        <dbReference type="PDB" id="1KFY"/>
    </source>
</evidence>
<evidence type="ECO:0007744" key="17">
    <source>
        <dbReference type="PDB" id="1L0V"/>
    </source>
</evidence>
<evidence type="ECO:0007744" key="18">
    <source>
        <dbReference type="PDB" id="2B76"/>
    </source>
</evidence>
<evidence type="ECO:0007744" key="19">
    <source>
        <dbReference type="PDB" id="3CIR"/>
    </source>
</evidence>
<evidence type="ECO:0007829" key="20">
    <source>
        <dbReference type="PDB" id="1KF6"/>
    </source>
</evidence>
<evidence type="ECO:0007829" key="21">
    <source>
        <dbReference type="PDB" id="1L0V"/>
    </source>
</evidence>
<evidence type="ECO:0007829" key="22">
    <source>
        <dbReference type="PDB" id="3P4P"/>
    </source>
</evidence>
<evidence type="ECO:0007829" key="23">
    <source>
        <dbReference type="PDB" id="6B58"/>
    </source>
</evidence>